<accession>P98053</accession>
<comment type="function">
    <text>Cytochrome c oxidase is the component of the respiratory chain that catalyzes the reduction of oxygen to water. Subunits 1-3 form the functional core of the enzyme complex. Subunit 2 transfers the electrons from cytochrome c via its binuclear copper A center to the bimetallic center of the catalytic subunit 1.</text>
</comment>
<comment type="catalytic activity">
    <reaction>
        <text>4 Fe(II)-[cytochrome c] + O2 + 8 H(+)(in) = 4 Fe(III)-[cytochrome c] + 2 H2O + 4 H(+)(out)</text>
        <dbReference type="Rhea" id="RHEA:11436"/>
        <dbReference type="Rhea" id="RHEA-COMP:10350"/>
        <dbReference type="Rhea" id="RHEA-COMP:14399"/>
        <dbReference type="ChEBI" id="CHEBI:15377"/>
        <dbReference type="ChEBI" id="CHEBI:15378"/>
        <dbReference type="ChEBI" id="CHEBI:15379"/>
        <dbReference type="ChEBI" id="CHEBI:29033"/>
        <dbReference type="ChEBI" id="CHEBI:29034"/>
        <dbReference type="EC" id="7.1.1.9"/>
    </reaction>
</comment>
<comment type="subcellular location">
    <subcellularLocation>
        <location>Cell membrane</location>
        <topology>Multi-pass membrane protein</topology>
    </subcellularLocation>
</comment>
<comment type="developmental stage">
    <text>Bacteroid (nitrogen-fixing endosymbiont).</text>
</comment>
<comment type="similarity">
    <text evidence="2">Belongs to the cytochrome c oxidase subunit 2 family.</text>
</comment>
<dbReference type="EC" id="7.1.1.9"/>
<dbReference type="EMBL" id="X68547">
    <property type="protein sequence ID" value="CAA48547.1"/>
    <property type="molecule type" value="Genomic_DNA"/>
</dbReference>
<dbReference type="EMBL" id="BA000040">
    <property type="protein sequence ID" value="BAC49050.1"/>
    <property type="molecule type" value="Genomic_DNA"/>
</dbReference>
<dbReference type="PIR" id="B48364">
    <property type="entry name" value="B48364"/>
</dbReference>
<dbReference type="RefSeq" id="NP_770425.1">
    <property type="nucleotide sequence ID" value="NC_004463.1"/>
</dbReference>
<dbReference type="RefSeq" id="WP_011086566.1">
    <property type="nucleotide sequence ID" value="NC_004463.1"/>
</dbReference>
<dbReference type="SMR" id="P98053"/>
<dbReference type="STRING" id="224911.AAV28_15910"/>
<dbReference type="EnsemblBacteria" id="BAC49050">
    <property type="protein sequence ID" value="BAC49050"/>
    <property type="gene ID" value="BAC49050"/>
</dbReference>
<dbReference type="GeneID" id="46490791"/>
<dbReference type="KEGG" id="bja:bll3785"/>
<dbReference type="PATRIC" id="fig|224911.44.peg.3453"/>
<dbReference type="eggNOG" id="COG1622">
    <property type="taxonomic scope" value="Bacteria"/>
</dbReference>
<dbReference type="HOGENOM" id="CLU_036876_4_1_5"/>
<dbReference type="InParanoid" id="P98053"/>
<dbReference type="OrthoDB" id="9781261at2"/>
<dbReference type="PhylomeDB" id="P98053"/>
<dbReference type="Proteomes" id="UP000002526">
    <property type="component" value="Chromosome"/>
</dbReference>
<dbReference type="GO" id="GO:0005886">
    <property type="term" value="C:plasma membrane"/>
    <property type="evidence" value="ECO:0007669"/>
    <property type="project" value="UniProtKB-SubCell"/>
</dbReference>
<dbReference type="GO" id="GO:0005507">
    <property type="term" value="F:copper ion binding"/>
    <property type="evidence" value="ECO:0007669"/>
    <property type="project" value="InterPro"/>
</dbReference>
<dbReference type="GO" id="GO:0004129">
    <property type="term" value="F:cytochrome-c oxidase activity"/>
    <property type="evidence" value="ECO:0007669"/>
    <property type="project" value="UniProtKB-EC"/>
</dbReference>
<dbReference type="GO" id="GO:0042773">
    <property type="term" value="P:ATP synthesis coupled electron transport"/>
    <property type="evidence" value="ECO:0000318"/>
    <property type="project" value="GO_Central"/>
</dbReference>
<dbReference type="CDD" id="cd13919">
    <property type="entry name" value="CuRO_HCO_II_like_5"/>
    <property type="match status" value="1"/>
</dbReference>
<dbReference type="Gene3D" id="1.10.287.90">
    <property type="match status" value="1"/>
</dbReference>
<dbReference type="Gene3D" id="2.60.40.420">
    <property type="entry name" value="Cupredoxins - blue copper proteins"/>
    <property type="match status" value="1"/>
</dbReference>
<dbReference type="InterPro" id="IPR045187">
    <property type="entry name" value="CcO_II"/>
</dbReference>
<dbReference type="InterPro" id="IPR002429">
    <property type="entry name" value="CcO_II-like_C"/>
</dbReference>
<dbReference type="InterPro" id="IPR001505">
    <property type="entry name" value="Copper_CuA"/>
</dbReference>
<dbReference type="InterPro" id="IPR008972">
    <property type="entry name" value="Cupredoxin"/>
</dbReference>
<dbReference type="InterPro" id="IPR036257">
    <property type="entry name" value="Cyt_c_oxidase_su2_TM_sf"/>
</dbReference>
<dbReference type="PANTHER" id="PTHR22888:SF9">
    <property type="entry name" value="CYTOCHROME C OXIDASE SUBUNIT 2"/>
    <property type="match status" value="1"/>
</dbReference>
<dbReference type="PANTHER" id="PTHR22888">
    <property type="entry name" value="CYTOCHROME C OXIDASE, SUBUNIT II"/>
    <property type="match status" value="1"/>
</dbReference>
<dbReference type="Pfam" id="PF00116">
    <property type="entry name" value="COX2"/>
    <property type="match status" value="1"/>
</dbReference>
<dbReference type="SUPFAM" id="SSF49503">
    <property type="entry name" value="Cupredoxins"/>
    <property type="match status" value="1"/>
</dbReference>
<dbReference type="SUPFAM" id="SSF81464">
    <property type="entry name" value="Cytochrome c oxidase subunit II-like, transmembrane region"/>
    <property type="match status" value="1"/>
</dbReference>
<dbReference type="PROSITE" id="PS00078">
    <property type="entry name" value="COX2"/>
    <property type="match status" value="1"/>
</dbReference>
<dbReference type="PROSITE" id="PS50857">
    <property type="entry name" value="COX2_CUA"/>
    <property type="match status" value="1"/>
</dbReference>
<evidence type="ECO:0000255" key="1"/>
<evidence type="ECO:0000305" key="2"/>
<keyword id="KW-1003">Cell membrane</keyword>
<keyword id="KW-0186">Copper</keyword>
<keyword id="KW-0249">Electron transport</keyword>
<keyword id="KW-0349">Heme</keyword>
<keyword id="KW-0408">Iron</keyword>
<keyword id="KW-0472">Membrane</keyword>
<keyword id="KW-0479">Metal-binding</keyword>
<keyword id="KW-1185">Reference proteome</keyword>
<keyword id="KW-1278">Translocase</keyword>
<keyword id="KW-0812">Transmembrane</keyword>
<keyword id="KW-1133">Transmembrane helix</keyword>
<keyword id="KW-0813">Transport</keyword>
<gene>
    <name type="primary">coxM</name>
    <name type="ordered locus">bll3785</name>
</gene>
<name>COXM_BRADU</name>
<protein>
    <recommendedName>
        <fullName>Alternative cytochrome c oxidase subunit 2</fullName>
        <ecNumber>7.1.1.9</ecNumber>
    </recommendedName>
    <alternativeName>
        <fullName>Alternative cytochrome c oxidase polypeptide II</fullName>
    </alternativeName>
    <alternativeName>
        <fullName>Cytochrome BB3 subunit 2</fullName>
    </alternativeName>
    <alternativeName>
        <fullName>Oxidase BB(3) subunit 2</fullName>
    </alternativeName>
</protein>
<proteinExistence type="evidence at transcript level"/>
<feature type="chain" id="PRO_0000183724" description="Alternative cytochrome c oxidase subunit 2">
    <location>
        <begin position="1"/>
        <end position="277"/>
    </location>
</feature>
<feature type="topological domain" description="Periplasmic" evidence="1">
    <location>
        <begin position="1"/>
        <end position="40"/>
    </location>
</feature>
<feature type="transmembrane region" description="Helical" evidence="1">
    <location>
        <begin position="41"/>
        <end position="61"/>
    </location>
</feature>
<feature type="topological domain" description="Cytoplasmic" evidence="1">
    <location>
        <begin position="62"/>
        <end position="83"/>
    </location>
</feature>
<feature type="transmembrane region" description="Helical" evidence="1">
    <location>
        <begin position="84"/>
        <end position="104"/>
    </location>
</feature>
<feature type="topological domain" description="Periplasmic" evidence="1">
    <location>
        <begin position="105"/>
        <end position="277"/>
    </location>
</feature>
<feature type="binding site" evidence="2">
    <location>
        <position position="190"/>
    </location>
    <ligand>
        <name>Cu cation</name>
        <dbReference type="ChEBI" id="CHEBI:23378"/>
        <label>A</label>
    </ligand>
</feature>
<feature type="binding site" evidence="2">
    <location>
        <position position="225"/>
    </location>
    <ligand>
        <name>Cu cation</name>
        <dbReference type="ChEBI" id="CHEBI:23378"/>
        <label>A</label>
    </ligand>
</feature>
<feature type="binding site" evidence="2">
    <location>
        <position position="229"/>
    </location>
    <ligand>
        <name>Cu cation</name>
        <dbReference type="ChEBI" id="CHEBI:23378"/>
        <label>A</label>
    </ligand>
</feature>
<feature type="binding site" evidence="2">
    <location>
        <position position="233"/>
    </location>
    <ligand>
        <name>Cu cation</name>
        <dbReference type="ChEBI" id="CHEBI:23378"/>
        <label>A</label>
    </ligand>
</feature>
<reference key="1">
    <citation type="journal article" date="1992" name="Arch. Microbiol.">
        <title>Genes for a second terminal oxidase in Bradyrhizobium japonicum.</title>
        <authorList>
            <person name="Bott M."/>
            <person name="Preisig O."/>
            <person name="Hennecke H."/>
        </authorList>
    </citation>
    <scope>NUCLEOTIDE SEQUENCE [GENOMIC DNA]</scope>
    <source>
        <strain>USDA 110spc4</strain>
    </source>
</reference>
<reference key="2">
    <citation type="journal article" date="2002" name="DNA Res.">
        <title>Complete genomic sequence of nitrogen-fixing symbiotic bacterium Bradyrhizobium japonicum USDA110.</title>
        <authorList>
            <person name="Kaneko T."/>
            <person name="Nakamura Y."/>
            <person name="Sato S."/>
            <person name="Minamisawa K."/>
            <person name="Uchiumi T."/>
            <person name="Sasamoto S."/>
            <person name="Watanabe A."/>
            <person name="Idesawa K."/>
            <person name="Iriguchi M."/>
            <person name="Kawashima K."/>
            <person name="Kohara M."/>
            <person name="Matsumoto M."/>
            <person name="Shimpo S."/>
            <person name="Tsuruoka H."/>
            <person name="Wada T."/>
            <person name="Yamada M."/>
            <person name="Tabata S."/>
        </authorList>
    </citation>
    <scope>NUCLEOTIDE SEQUENCE [LARGE SCALE GENOMIC DNA]</scope>
    <source>
        <strain>JCM 10833 / BCRC 13528 / IAM 13628 / NBRC 14792 / USDA 110</strain>
    </source>
</reference>
<organism>
    <name type="scientific">Bradyrhizobium diazoefficiens (strain JCM 10833 / BCRC 13528 / IAM 13628 / NBRC 14792 / USDA 110)</name>
    <dbReference type="NCBI Taxonomy" id="224911"/>
    <lineage>
        <taxon>Bacteria</taxon>
        <taxon>Pseudomonadati</taxon>
        <taxon>Pseudomonadota</taxon>
        <taxon>Alphaproteobacteria</taxon>
        <taxon>Hyphomicrobiales</taxon>
        <taxon>Nitrobacteraceae</taxon>
        <taxon>Bradyrhizobium</taxon>
    </lineage>
</organism>
<sequence length="277" mass="31327">MAVALILLLIAIGSVLFHLFSPWWWTPIATNWGYIDDTINITFWITGFVFTAVILFMAYCVFRFHHKEGRQAAYNPENKKLEWWLSVGTGVGVAAMLAPGLVVWHQFVTVPADATEVEIMGQQWQWSFRLPGKDGRLGTSDVRNISPENPMGLNRDDPHGQDDVVIENGDLHLPIGKPVKVLLRSVDVLHDFYVPEFRAKMDMVPGMVTYFWIRPIRTGTFDVLCAELCGAAHYQMRAKVIVEAESDYHAWLEQQKTFAGLSGRNAVVRAKYNSGDD</sequence>